<dbReference type="EMBL" id="CP001618">
    <property type="protein sequence ID" value="ACQ80757.1"/>
    <property type="molecule type" value="Genomic_DNA"/>
</dbReference>
<dbReference type="RefSeq" id="WP_015882997.1">
    <property type="nucleotide sequence ID" value="NC_012669.1"/>
</dbReference>
<dbReference type="SMR" id="C5BWU1"/>
<dbReference type="STRING" id="471853.Bcav_2507"/>
<dbReference type="KEGG" id="bcv:Bcav_2507"/>
<dbReference type="eggNOG" id="COG0052">
    <property type="taxonomic scope" value="Bacteria"/>
</dbReference>
<dbReference type="HOGENOM" id="CLU_040318_2_3_11"/>
<dbReference type="OrthoDB" id="9808036at2"/>
<dbReference type="Proteomes" id="UP000007962">
    <property type="component" value="Chromosome"/>
</dbReference>
<dbReference type="GO" id="GO:0022627">
    <property type="term" value="C:cytosolic small ribosomal subunit"/>
    <property type="evidence" value="ECO:0007669"/>
    <property type="project" value="TreeGrafter"/>
</dbReference>
<dbReference type="GO" id="GO:0003735">
    <property type="term" value="F:structural constituent of ribosome"/>
    <property type="evidence" value="ECO:0007669"/>
    <property type="project" value="InterPro"/>
</dbReference>
<dbReference type="GO" id="GO:0006412">
    <property type="term" value="P:translation"/>
    <property type="evidence" value="ECO:0007669"/>
    <property type="project" value="UniProtKB-UniRule"/>
</dbReference>
<dbReference type="CDD" id="cd01425">
    <property type="entry name" value="RPS2"/>
    <property type="match status" value="1"/>
</dbReference>
<dbReference type="FunFam" id="1.10.287.610:FF:000001">
    <property type="entry name" value="30S ribosomal protein S2"/>
    <property type="match status" value="1"/>
</dbReference>
<dbReference type="Gene3D" id="3.40.50.10490">
    <property type="entry name" value="Glucose-6-phosphate isomerase like protein, domain 1"/>
    <property type="match status" value="1"/>
</dbReference>
<dbReference type="Gene3D" id="1.10.287.610">
    <property type="entry name" value="Helix hairpin bin"/>
    <property type="match status" value="1"/>
</dbReference>
<dbReference type="HAMAP" id="MF_00291_B">
    <property type="entry name" value="Ribosomal_uS2_B"/>
    <property type="match status" value="1"/>
</dbReference>
<dbReference type="InterPro" id="IPR001865">
    <property type="entry name" value="Ribosomal_uS2"/>
</dbReference>
<dbReference type="InterPro" id="IPR005706">
    <property type="entry name" value="Ribosomal_uS2_bac/mit/plastid"/>
</dbReference>
<dbReference type="InterPro" id="IPR018130">
    <property type="entry name" value="Ribosomal_uS2_CS"/>
</dbReference>
<dbReference type="InterPro" id="IPR023591">
    <property type="entry name" value="Ribosomal_uS2_flav_dom_sf"/>
</dbReference>
<dbReference type="NCBIfam" id="TIGR01011">
    <property type="entry name" value="rpsB_bact"/>
    <property type="match status" value="1"/>
</dbReference>
<dbReference type="PANTHER" id="PTHR12534">
    <property type="entry name" value="30S RIBOSOMAL PROTEIN S2 PROKARYOTIC AND ORGANELLAR"/>
    <property type="match status" value="1"/>
</dbReference>
<dbReference type="PANTHER" id="PTHR12534:SF0">
    <property type="entry name" value="SMALL RIBOSOMAL SUBUNIT PROTEIN US2M"/>
    <property type="match status" value="1"/>
</dbReference>
<dbReference type="Pfam" id="PF00318">
    <property type="entry name" value="Ribosomal_S2"/>
    <property type="match status" value="1"/>
</dbReference>
<dbReference type="PRINTS" id="PR00395">
    <property type="entry name" value="RIBOSOMALS2"/>
</dbReference>
<dbReference type="SUPFAM" id="SSF52313">
    <property type="entry name" value="Ribosomal protein S2"/>
    <property type="match status" value="1"/>
</dbReference>
<dbReference type="PROSITE" id="PS00962">
    <property type="entry name" value="RIBOSOMAL_S2_1"/>
    <property type="match status" value="1"/>
</dbReference>
<evidence type="ECO:0000255" key="1">
    <source>
        <dbReference type="HAMAP-Rule" id="MF_00291"/>
    </source>
</evidence>
<evidence type="ECO:0000256" key="2">
    <source>
        <dbReference type="SAM" id="MobiDB-lite"/>
    </source>
</evidence>
<evidence type="ECO:0000305" key="3"/>
<comment type="similarity">
    <text evidence="1">Belongs to the universal ribosomal protein uS2 family.</text>
</comment>
<reference key="1">
    <citation type="journal article" date="2009" name="Stand. Genomic Sci.">
        <title>Complete genome sequence of Beutenbergia cavernae type strain (HKI 0122).</title>
        <authorList>
            <person name="Land M."/>
            <person name="Pukall R."/>
            <person name="Abt B."/>
            <person name="Goker M."/>
            <person name="Rohde M."/>
            <person name="Glavina Del Rio T."/>
            <person name="Tice H."/>
            <person name="Copeland A."/>
            <person name="Cheng J.F."/>
            <person name="Lucas S."/>
            <person name="Chen F."/>
            <person name="Nolan M."/>
            <person name="Bruce D."/>
            <person name="Goodwin L."/>
            <person name="Pitluck S."/>
            <person name="Ivanova N."/>
            <person name="Mavromatis K."/>
            <person name="Ovchinnikova G."/>
            <person name="Pati A."/>
            <person name="Chen A."/>
            <person name="Palaniappan K."/>
            <person name="Hauser L."/>
            <person name="Chang Y.J."/>
            <person name="Jefferies C.C."/>
            <person name="Saunders E."/>
            <person name="Brettin T."/>
            <person name="Detter J.C."/>
            <person name="Han C."/>
            <person name="Chain P."/>
            <person name="Bristow J."/>
            <person name="Eisen J.A."/>
            <person name="Markowitz V."/>
            <person name="Hugenholtz P."/>
            <person name="Kyrpides N.C."/>
            <person name="Klenk H.P."/>
            <person name="Lapidus A."/>
        </authorList>
    </citation>
    <scope>NUCLEOTIDE SEQUENCE [LARGE SCALE GENOMIC DNA]</scope>
    <source>
        <strain>ATCC BAA-8 / DSM 12333 / CCUG 43141 / JCM 11478 / NBRC 16432 / NCIMB 13614 / HKI 0122</strain>
    </source>
</reference>
<sequence length="353" mass="38114">MAVVTMRQLLESGVHFGHQTRRWNPKMKRFIFTERNGIYIIDLQQSLTDIDRAFSFVKDTVAHGGSILFVGTKKQAQEAVAEQASRVGMPYVNQRWLGGMLTNFQTVSKRLSRLKELEEIDFDDVAASGRTKKELLMMRREKDKLERTLGGIREMAKVPSAVWIVDTKKEHLAVAEARKLNIPVVAILDTNCDPDEVDYPIPGNDDAIRAVGLLTRVIADAVAEGTVARHGGSAPGEAGTAEEPLAEWERELLQGDTDEQSSAANTEEPTPAEAEALEAPADTPAEPLAAEADGETVAEAPAEVETAAEAPAEAEAEVEAESATPAEAEVEAESATPAEAEAETPAESTDEQA</sequence>
<gene>
    <name evidence="1" type="primary">rpsB</name>
    <name type="ordered locus">Bcav_2507</name>
</gene>
<proteinExistence type="inferred from homology"/>
<name>RS2_BEUC1</name>
<organism>
    <name type="scientific">Beutenbergia cavernae (strain ATCC BAA-8 / DSM 12333 / CCUG 43141 / JCM 11478 / NBRC 16432 / NCIMB 13614 / HKI 0122)</name>
    <dbReference type="NCBI Taxonomy" id="471853"/>
    <lineage>
        <taxon>Bacteria</taxon>
        <taxon>Bacillati</taxon>
        <taxon>Actinomycetota</taxon>
        <taxon>Actinomycetes</taxon>
        <taxon>Micrococcales</taxon>
        <taxon>Beutenbergiaceae</taxon>
        <taxon>Beutenbergia</taxon>
    </lineage>
</organism>
<keyword id="KW-1185">Reference proteome</keyword>
<keyword id="KW-0687">Ribonucleoprotein</keyword>
<keyword id="KW-0689">Ribosomal protein</keyword>
<accession>C5BWU1</accession>
<feature type="chain" id="PRO_1000204875" description="Small ribosomal subunit protein uS2">
    <location>
        <begin position="1"/>
        <end position="353"/>
    </location>
</feature>
<feature type="region of interest" description="Disordered" evidence="2">
    <location>
        <begin position="256"/>
        <end position="353"/>
    </location>
</feature>
<feature type="compositionally biased region" description="Low complexity" evidence="2">
    <location>
        <begin position="263"/>
        <end position="311"/>
    </location>
</feature>
<feature type="compositionally biased region" description="Low complexity" evidence="2">
    <location>
        <begin position="321"/>
        <end position="339"/>
    </location>
</feature>
<feature type="compositionally biased region" description="Acidic residues" evidence="2">
    <location>
        <begin position="340"/>
        <end position="353"/>
    </location>
</feature>
<protein>
    <recommendedName>
        <fullName evidence="1">Small ribosomal subunit protein uS2</fullName>
    </recommendedName>
    <alternativeName>
        <fullName evidence="3">30S ribosomal protein S2</fullName>
    </alternativeName>
</protein>